<dbReference type="EC" id="6.3.2.1" evidence="1"/>
<dbReference type="EMBL" id="AE016877">
    <property type="protein sequence ID" value="AAP08521.1"/>
    <property type="molecule type" value="Genomic_DNA"/>
</dbReference>
<dbReference type="RefSeq" id="NP_831320.1">
    <property type="nucleotide sequence ID" value="NC_004722.1"/>
</dbReference>
<dbReference type="RefSeq" id="WP_000706996.1">
    <property type="nucleotide sequence ID" value="NC_004722.1"/>
</dbReference>
<dbReference type="SMR" id="Q81FN6"/>
<dbReference type="STRING" id="226900.BC_1541"/>
<dbReference type="KEGG" id="bce:BC1541"/>
<dbReference type="PATRIC" id="fig|226900.8.peg.1517"/>
<dbReference type="HOGENOM" id="CLU_047148_0_0_9"/>
<dbReference type="UniPathway" id="UPA00028">
    <property type="reaction ID" value="UER00005"/>
</dbReference>
<dbReference type="Proteomes" id="UP000001417">
    <property type="component" value="Chromosome"/>
</dbReference>
<dbReference type="GO" id="GO:0005829">
    <property type="term" value="C:cytosol"/>
    <property type="evidence" value="ECO:0000318"/>
    <property type="project" value="GO_Central"/>
</dbReference>
<dbReference type="GO" id="GO:0005524">
    <property type="term" value="F:ATP binding"/>
    <property type="evidence" value="ECO:0007669"/>
    <property type="project" value="UniProtKB-KW"/>
</dbReference>
<dbReference type="GO" id="GO:0004592">
    <property type="term" value="F:pantoate-beta-alanine ligase activity"/>
    <property type="evidence" value="ECO:0000318"/>
    <property type="project" value="GO_Central"/>
</dbReference>
<dbReference type="GO" id="GO:0015940">
    <property type="term" value="P:pantothenate biosynthetic process"/>
    <property type="evidence" value="ECO:0000318"/>
    <property type="project" value="GO_Central"/>
</dbReference>
<dbReference type="CDD" id="cd00560">
    <property type="entry name" value="PanC"/>
    <property type="match status" value="1"/>
</dbReference>
<dbReference type="FunFam" id="3.30.1300.10:FF:000001">
    <property type="entry name" value="Pantothenate synthetase"/>
    <property type="match status" value="1"/>
</dbReference>
<dbReference type="FunFam" id="3.40.50.620:FF:000013">
    <property type="entry name" value="Pantothenate synthetase"/>
    <property type="match status" value="1"/>
</dbReference>
<dbReference type="Gene3D" id="3.40.50.620">
    <property type="entry name" value="HUPs"/>
    <property type="match status" value="1"/>
</dbReference>
<dbReference type="Gene3D" id="3.30.1300.10">
    <property type="entry name" value="Pantoate-beta-alanine ligase, C-terminal domain"/>
    <property type="match status" value="1"/>
</dbReference>
<dbReference type="HAMAP" id="MF_00158">
    <property type="entry name" value="PanC"/>
    <property type="match status" value="1"/>
</dbReference>
<dbReference type="InterPro" id="IPR004821">
    <property type="entry name" value="Cyt_trans-like"/>
</dbReference>
<dbReference type="InterPro" id="IPR003721">
    <property type="entry name" value="Pantoate_ligase"/>
</dbReference>
<dbReference type="InterPro" id="IPR042176">
    <property type="entry name" value="Pantoate_ligase_C"/>
</dbReference>
<dbReference type="InterPro" id="IPR014729">
    <property type="entry name" value="Rossmann-like_a/b/a_fold"/>
</dbReference>
<dbReference type="NCBIfam" id="TIGR00125">
    <property type="entry name" value="cyt_tran_rel"/>
    <property type="match status" value="1"/>
</dbReference>
<dbReference type="NCBIfam" id="TIGR00018">
    <property type="entry name" value="panC"/>
    <property type="match status" value="1"/>
</dbReference>
<dbReference type="PANTHER" id="PTHR21299">
    <property type="entry name" value="CYTIDYLATE KINASE/PANTOATE-BETA-ALANINE LIGASE"/>
    <property type="match status" value="1"/>
</dbReference>
<dbReference type="PANTHER" id="PTHR21299:SF1">
    <property type="entry name" value="PANTOATE--BETA-ALANINE LIGASE"/>
    <property type="match status" value="1"/>
</dbReference>
<dbReference type="Pfam" id="PF02569">
    <property type="entry name" value="Pantoate_ligase"/>
    <property type="match status" value="1"/>
</dbReference>
<dbReference type="SUPFAM" id="SSF52374">
    <property type="entry name" value="Nucleotidylyl transferase"/>
    <property type="match status" value="1"/>
</dbReference>
<accession>Q81FN6</accession>
<sequence>MKIVTTVQDMQQITSELRASGKSIGFVPTMGYLHEGHATLLRKAREENKIVVLSVFVNPLQFGPNEDLDRYPRDIDRDENVAKENGVDYLFYPSVEEMYPAEQTTTVEVVKRTDVLCGQQRPGHFAGVATVLMKLFNITVPTRAYFGMKDAQQVAVIEGFVTDFNIPVTIVPVDIVREEDGLAKSSRNVYLSQDEREEALHLYRSLCIAKERIEAGERNPEIITNLVKDYIETHTKGTVDYADLYAYPSLTMVEKVEGRIILAIAVKFENVRLIDNITLTVK</sequence>
<feature type="chain" id="PRO_0000128200" description="Pantothenate synthetase">
    <location>
        <begin position="1"/>
        <end position="282"/>
    </location>
</feature>
<feature type="active site" description="Proton donor" evidence="1">
    <location>
        <position position="37"/>
    </location>
</feature>
<feature type="binding site" evidence="1">
    <location>
        <begin position="30"/>
        <end position="37"/>
    </location>
    <ligand>
        <name>ATP</name>
        <dbReference type="ChEBI" id="CHEBI:30616"/>
    </ligand>
</feature>
<feature type="binding site" evidence="1">
    <location>
        <position position="61"/>
    </location>
    <ligand>
        <name>(R)-pantoate</name>
        <dbReference type="ChEBI" id="CHEBI:15980"/>
    </ligand>
</feature>
<feature type="binding site" evidence="1">
    <location>
        <position position="61"/>
    </location>
    <ligand>
        <name>beta-alanine</name>
        <dbReference type="ChEBI" id="CHEBI:57966"/>
    </ligand>
</feature>
<feature type="binding site" evidence="1">
    <location>
        <begin position="147"/>
        <end position="150"/>
    </location>
    <ligand>
        <name>ATP</name>
        <dbReference type="ChEBI" id="CHEBI:30616"/>
    </ligand>
</feature>
<feature type="binding site" evidence="1">
    <location>
        <position position="153"/>
    </location>
    <ligand>
        <name>(R)-pantoate</name>
        <dbReference type="ChEBI" id="CHEBI:15980"/>
    </ligand>
</feature>
<feature type="binding site" evidence="1">
    <location>
        <position position="176"/>
    </location>
    <ligand>
        <name>ATP</name>
        <dbReference type="ChEBI" id="CHEBI:30616"/>
    </ligand>
</feature>
<feature type="binding site" evidence="1">
    <location>
        <begin position="184"/>
        <end position="187"/>
    </location>
    <ligand>
        <name>ATP</name>
        <dbReference type="ChEBI" id="CHEBI:30616"/>
    </ligand>
</feature>
<gene>
    <name evidence="1" type="primary">panC</name>
    <name type="ordered locus">BC_1541</name>
</gene>
<proteinExistence type="inferred from homology"/>
<comment type="function">
    <text evidence="1">Catalyzes the condensation of pantoate with beta-alanine in an ATP-dependent reaction via a pantoyl-adenylate intermediate.</text>
</comment>
<comment type="catalytic activity">
    <reaction evidence="1">
        <text>(R)-pantoate + beta-alanine + ATP = (R)-pantothenate + AMP + diphosphate + H(+)</text>
        <dbReference type="Rhea" id="RHEA:10912"/>
        <dbReference type="ChEBI" id="CHEBI:15378"/>
        <dbReference type="ChEBI" id="CHEBI:15980"/>
        <dbReference type="ChEBI" id="CHEBI:29032"/>
        <dbReference type="ChEBI" id="CHEBI:30616"/>
        <dbReference type="ChEBI" id="CHEBI:33019"/>
        <dbReference type="ChEBI" id="CHEBI:57966"/>
        <dbReference type="ChEBI" id="CHEBI:456215"/>
        <dbReference type="EC" id="6.3.2.1"/>
    </reaction>
</comment>
<comment type="pathway">
    <text evidence="1">Cofactor biosynthesis; (R)-pantothenate biosynthesis; (R)-pantothenate from (R)-pantoate and beta-alanine: step 1/1.</text>
</comment>
<comment type="subunit">
    <text evidence="1">Homodimer.</text>
</comment>
<comment type="subcellular location">
    <subcellularLocation>
        <location evidence="1">Cytoplasm</location>
    </subcellularLocation>
</comment>
<comment type="miscellaneous">
    <text evidence="1">The reaction proceeds by a bi uni uni bi ping pong mechanism.</text>
</comment>
<comment type="similarity">
    <text evidence="1">Belongs to the pantothenate synthetase family.</text>
</comment>
<organism>
    <name type="scientific">Bacillus cereus (strain ATCC 14579 / DSM 31 / CCUG 7414 / JCM 2152 / NBRC 15305 / NCIMB 9373 / NCTC 2599 / NRRL B-3711)</name>
    <dbReference type="NCBI Taxonomy" id="226900"/>
    <lineage>
        <taxon>Bacteria</taxon>
        <taxon>Bacillati</taxon>
        <taxon>Bacillota</taxon>
        <taxon>Bacilli</taxon>
        <taxon>Bacillales</taxon>
        <taxon>Bacillaceae</taxon>
        <taxon>Bacillus</taxon>
        <taxon>Bacillus cereus group</taxon>
    </lineage>
</organism>
<evidence type="ECO:0000255" key="1">
    <source>
        <dbReference type="HAMAP-Rule" id="MF_00158"/>
    </source>
</evidence>
<protein>
    <recommendedName>
        <fullName evidence="1">Pantothenate synthetase</fullName>
        <shortName evidence="1">PS</shortName>
        <ecNumber evidence="1">6.3.2.1</ecNumber>
    </recommendedName>
    <alternativeName>
        <fullName evidence="1">Pantoate--beta-alanine ligase</fullName>
    </alternativeName>
    <alternativeName>
        <fullName evidence="1">Pantoate-activating enzyme</fullName>
    </alternativeName>
</protein>
<keyword id="KW-0067">ATP-binding</keyword>
<keyword id="KW-0963">Cytoplasm</keyword>
<keyword id="KW-0436">Ligase</keyword>
<keyword id="KW-0547">Nucleotide-binding</keyword>
<keyword id="KW-0566">Pantothenate biosynthesis</keyword>
<keyword id="KW-1185">Reference proteome</keyword>
<name>PANC_BACCR</name>
<reference key="1">
    <citation type="journal article" date="2003" name="Nature">
        <title>Genome sequence of Bacillus cereus and comparative analysis with Bacillus anthracis.</title>
        <authorList>
            <person name="Ivanova N."/>
            <person name="Sorokin A."/>
            <person name="Anderson I."/>
            <person name="Galleron N."/>
            <person name="Candelon B."/>
            <person name="Kapatral V."/>
            <person name="Bhattacharyya A."/>
            <person name="Reznik G."/>
            <person name="Mikhailova N."/>
            <person name="Lapidus A."/>
            <person name="Chu L."/>
            <person name="Mazur M."/>
            <person name="Goltsman E."/>
            <person name="Larsen N."/>
            <person name="D'Souza M."/>
            <person name="Walunas T."/>
            <person name="Grechkin Y."/>
            <person name="Pusch G."/>
            <person name="Haselkorn R."/>
            <person name="Fonstein M."/>
            <person name="Ehrlich S.D."/>
            <person name="Overbeek R."/>
            <person name="Kyrpides N.C."/>
        </authorList>
    </citation>
    <scope>NUCLEOTIDE SEQUENCE [LARGE SCALE GENOMIC DNA]</scope>
    <source>
        <strain>ATCC 14579 / DSM 31 / CCUG 7414 / JCM 2152 / NBRC 15305 / NCIMB 9373 / NCTC 2599 / NRRL B-3711</strain>
    </source>
</reference>